<proteinExistence type="evidence at protein level"/>
<gene>
    <name type="primary">Stambp</name>
    <name type="synonym">Amsh</name>
</gene>
<reference key="1">
    <citation type="journal article" date="2001" name="Mol. Cell. Biol.">
        <title>Loss of neurons in the hippocampus and cerebral cortex of AMSH-deficient mice.</title>
        <authorList>
            <person name="Ishii N."/>
            <person name="Owada Y."/>
            <person name="Yamada M."/>
            <person name="Miura S."/>
            <person name="Murata K."/>
            <person name="Asao H."/>
            <person name="Kondo H."/>
            <person name="Sugamura K."/>
        </authorList>
    </citation>
    <scope>NUCLEOTIDE SEQUENCE [MRNA]</scope>
    <scope>DISRUPTION PHENOTYPE</scope>
    <scope>TISSUE SPECIFICITY</scope>
    <scope>DEVELOPMENTAL STAGE</scope>
    <source>
        <strain>C57BL/6J</strain>
        <tissue>Brain</tissue>
    </source>
</reference>
<reference key="2">
    <citation type="journal article" date="2005" name="Science">
        <title>The transcriptional landscape of the mammalian genome.</title>
        <authorList>
            <person name="Carninci P."/>
            <person name="Kasukawa T."/>
            <person name="Katayama S."/>
            <person name="Gough J."/>
            <person name="Frith M.C."/>
            <person name="Maeda N."/>
            <person name="Oyama R."/>
            <person name="Ravasi T."/>
            <person name="Lenhard B."/>
            <person name="Wells C."/>
            <person name="Kodzius R."/>
            <person name="Shimokawa K."/>
            <person name="Bajic V.B."/>
            <person name="Brenner S.E."/>
            <person name="Batalov S."/>
            <person name="Forrest A.R."/>
            <person name="Zavolan M."/>
            <person name="Davis M.J."/>
            <person name="Wilming L.G."/>
            <person name="Aidinis V."/>
            <person name="Allen J.E."/>
            <person name="Ambesi-Impiombato A."/>
            <person name="Apweiler R."/>
            <person name="Aturaliya R.N."/>
            <person name="Bailey T.L."/>
            <person name="Bansal M."/>
            <person name="Baxter L."/>
            <person name="Beisel K.W."/>
            <person name="Bersano T."/>
            <person name="Bono H."/>
            <person name="Chalk A.M."/>
            <person name="Chiu K.P."/>
            <person name="Choudhary V."/>
            <person name="Christoffels A."/>
            <person name="Clutterbuck D.R."/>
            <person name="Crowe M.L."/>
            <person name="Dalla E."/>
            <person name="Dalrymple B.P."/>
            <person name="de Bono B."/>
            <person name="Della Gatta G."/>
            <person name="di Bernardo D."/>
            <person name="Down T."/>
            <person name="Engstrom P."/>
            <person name="Fagiolini M."/>
            <person name="Faulkner G."/>
            <person name="Fletcher C.F."/>
            <person name="Fukushima T."/>
            <person name="Furuno M."/>
            <person name="Futaki S."/>
            <person name="Gariboldi M."/>
            <person name="Georgii-Hemming P."/>
            <person name="Gingeras T.R."/>
            <person name="Gojobori T."/>
            <person name="Green R.E."/>
            <person name="Gustincich S."/>
            <person name="Harbers M."/>
            <person name="Hayashi Y."/>
            <person name="Hensch T.K."/>
            <person name="Hirokawa N."/>
            <person name="Hill D."/>
            <person name="Huminiecki L."/>
            <person name="Iacono M."/>
            <person name="Ikeo K."/>
            <person name="Iwama A."/>
            <person name="Ishikawa T."/>
            <person name="Jakt M."/>
            <person name="Kanapin A."/>
            <person name="Katoh M."/>
            <person name="Kawasawa Y."/>
            <person name="Kelso J."/>
            <person name="Kitamura H."/>
            <person name="Kitano H."/>
            <person name="Kollias G."/>
            <person name="Krishnan S.P."/>
            <person name="Kruger A."/>
            <person name="Kummerfeld S.K."/>
            <person name="Kurochkin I.V."/>
            <person name="Lareau L.F."/>
            <person name="Lazarevic D."/>
            <person name="Lipovich L."/>
            <person name="Liu J."/>
            <person name="Liuni S."/>
            <person name="McWilliam S."/>
            <person name="Madan Babu M."/>
            <person name="Madera M."/>
            <person name="Marchionni L."/>
            <person name="Matsuda H."/>
            <person name="Matsuzawa S."/>
            <person name="Miki H."/>
            <person name="Mignone F."/>
            <person name="Miyake S."/>
            <person name="Morris K."/>
            <person name="Mottagui-Tabar S."/>
            <person name="Mulder N."/>
            <person name="Nakano N."/>
            <person name="Nakauchi H."/>
            <person name="Ng P."/>
            <person name="Nilsson R."/>
            <person name="Nishiguchi S."/>
            <person name="Nishikawa S."/>
            <person name="Nori F."/>
            <person name="Ohara O."/>
            <person name="Okazaki Y."/>
            <person name="Orlando V."/>
            <person name="Pang K.C."/>
            <person name="Pavan W.J."/>
            <person name="Pavesi G."/>
            <person name="Pesole G."/>
            <person name="Petrovsky N."/>
            <person name="Piazza S."/>
            <person name="Reed J."/>
            <person name="Reid J.F."/>
            <person name="Ring B.Z."/>
            <person name="Ringwald M."/>
            <person name="Rost B."/>
            <person name="Ruan Y."/>
            <person name="Salzberg S.L."/>
            <person name="Sandelin A."/>
            <person name="Schneider C."/>
            <person name="Schoenbach C."/>
            <person name="Sekiguchi K."/>
            <person name="Semple C.A."/>
            <person name="Seno S."/>
            <person name="Sessa L."/>
            <person name="Sheng Y."/>
            <person name="Shibata Y."/>
            <person name="Shimada H."/>
            <person name="Shimada K."/>
            <person name="Silva D."/>
            <person name="Sinclair B."/>
            <person name="Sperling S."/>
            <person name="Stupka E."/>
            <person name="Sugiura K."/>
            <person name="Sultana R."/>
            <person name="Takenaka Y."/>
            <person name="Taki K."/>
            <person name="Tammoja K."/>
            <person name="Tan S.L."/>
            <person name="Tang S."/>
            <person name="Taylor M.S."/>
            <person name="Tegner J."/>
            <person name="Teichmann S.A."/>
            <person name="Ueda H.R."/>
            <person name="van Nimwegen E."/>
            <person name="Verardo R."/>
            <person name="Wei C.L."/>
            <person name="Yagi K."/>
            <person name="Yamanishi H."/>
            <person name="Zabarovsky E."/>
            <person name="Zhu S."/>
            <person name="Zimmer A."/>
            <person name="Hide W."/>
            <person name="Bult C."/>
            <person name="Grimmond S.M."/>
            <person name="Teasdale R.D."/>
            <person name="Liu E.T."/>
            <person name="Brusic V."/>
            <person name="Quackenbush J."/>
            <person name="Wahlestedt C."/>
            <person name="Mattick J.S."/>
            <person name="Hume D.A."/>
            <person name="Kai C."/>
            <person name="Sasaki D."/>
            <person name="Tomaru Y."/>
            <person name="Fukuda S."/>
            <person name="Kanamori-Katayama M."/>
            <person name="Suzuki M."/>
            <person name="Aoki J."/>
            <person name="Arakawa T."/>
            <person name="Iida J."/>
            <person name="Imamura K."/>
            <person name="Itoh M."/>
            <person name="Kato T."/>
            <person name="Kawaji H."/>
            <person name="Kawagashira N."/>
            <person name="Kawashima T."/>
            <person name="Kojima M."/>
            <person name="Kondo S."/>
            <person name="Konno H."/>
            <person name="Nakano K."/>
            <person name="Ninomiya N."/>
            <person name="Nishio T."/>
            <person name="Okada M."/>
            <person name="Plessy C."/>
            <person name="Shibata K."/>
            <person name="Shiraki T."/>
            <person name="Suzuki S."/>
            <person name="Tagami M."/>
            <person name="Waki K."/>
            <person name="Watahiki A."/>
            <person name="Okamura-Oho Y."/>
            <person name="Suzuki H."/>
            <person name="Kawai J."/>
            <person name="Hayashizaki Y."/>
        </authorList>
    </citation>
    <scope>NUCLEOTIDE SEQUENCE [LARGE SCALE MRNA]</scope>
    <source>
        <strain>C57BL/6J</strain>
        <tissue>Brain cortex</tissue>
        <tissue>Embryo</tissue>
        <tissue>Pituitary</tissue>
    </source>
</reference>
<reference key="3">
    <citation type="journal article" date="2004" name="Genome Res.">
        <title>The status, quality, and expansion of the NIH full-length cDNA project: the Mammalian Gene Collection (MGC).</title>
        <authorList>
            <consortium name="The MGC Project Team"/>
        </authorList>
    </citation>
    <scope>NUCLEOTIDE SEQUENCE [LARGE SCALE MRNA]</scope>
    <source>
        <strain>129</strain>
        <strain>FVB/N</strain>
        <tissue>Liver</tissue>
        <tissue>Mammary tumor</tissue>
    </source>
</reference>
<reference key="4">
    <citation type="journal article" date="2010" name="Cell">
        <title>A tissue-specific atlas of mouse protein phosphorylation and expression.</title>
        <authorList>
            <person name="Huttlin E.L."/>
            <person name="Jedrychowski M.P."/>
            <person name="Elias J.E."/>
            <person name="Goswami T."/>
            <person name="Rad R."/>
            <person name="Beausoleil S.A."/>
            <person name="Villen J."/>
            <person name="Haas W."/>
            <person name="Sowa M.E."/>
            <person name="Gygi S.P."/>
        </authorList>
    </citation>
    <scope>IDENTIFICATION BY MASS SPECTROMETRY [LARGE SCALE ANALYSIS]</scope>
    <source>
        <tissue>Testis</tissue>
    </source>
</reference>
<organism>
    <name type="scientific">Mus musculus</name>
    <name type="common">Mouse</name>
    <dbReference type="NCBI Taxonomy" id="10090"/>
    <lineage>
        <taxon>Eukaryota</taxon>
        <taxon>Metazoa</taxon>
        <taxon>Chordata</taxon>
        <taxon>Craniata</taxon>
        <taxon>Vertebrata</taxon>
        <taxon>Euteleostomi</taxon>
        <taxon>Mammalia</taxon>
        <taxon>Eutheria</taxon>
        <taxon>Euarchontoglires</taxon>
        <taxon>Glires</taxon>
        <taxon>Rodentia</taxon>
        <taxon>Myomorpha</taxon>
        <taxon>Muroidea</taxon>
        <taxon>Muridae</taxon>
        <taxon>Murinae</taxon>
        <taxon>Mus</taxon>
        <taxon>Mus</taxon>
    </lineage>
</organism>
<evidence type="ECO:0000250" key="1">
    <source>
        <dbReference type="UniProtKB" id="O35864"/>
    </source>
</evidence>
<evidence type="ECO:0000250" key="2">
    <source>
        <dbReference type="UniProtKB" id="O95630"/>
    </source>
</evidence>
<evidence type="ECO:0000250" key="3">
    <source>
        <dbReference type="UniProtKB" id="Q96FJ0"/>
    </source>
</evidence>
<evidence type="ECO:0000255" key="4">
    <source>
        <dbReference type="PROSITE-ProRule" id="PRU01182"/>
    </source>
</evidence>
<evidence type="ECO:0000269" key="5">
    <source>
    </source>
</evidence>
<evidence type="ECO:0000305" key="6"/>
<feature type="chain" id="PRO_0000194870" description="STAM-binding protein">
    <location>
        <begin position="1"/>
        <end position="424"/>
    </location>
</feature>
<feature type="domain" description="MPN" evidence="4">
    <location>
        <begin position="257"/>
        <end position="388"/>
    </location>
</feature>
<feature type="region of interest" description="Interaction with CHMP3" evidence="2">
    <location>
        <begin position="1"/>
        <end position="127"/>
    </location>
</feature>
<feature type="region of interest" description="Interaction with STAM" evidence="2">
    <location>
        <begin position="227"/>
        <end position="231"/>
    </location>
</feature>
<feature type="short sequence motif" description="JAMM motif" evidence="4">
    <location>
        <begin position="335"/>
        <end position="348"/>
    </location>
</feature>
<feature type="binding site" evidence="4">
    <location>
        <position position="335"/>
    </location>
    <ligand>
        <name>Zn(2+)</name>
        <dbReference type="ChEBI" id="CHEBI:29105"/>
        <label>1</label>
        <note>catalytic</note>
    </ligand>
</feature>
<feature type="binding site" evidence="4">
    <location>
        <position position="337"/>
    </location>
    <ligand>
        <name>Zn(2+)</name>
        <dbReference type="ChEBI" id="CHEBI:29105"/>
        <label>1</label>
        <note>catalytic</note>
    </ligand>
</feature>
<feature type="binding site" evidence="4">
    <location>
        <position position="348"/>
    </location>
    <ligand>
        <name>Zn(2+)</name>
        <dbReference type="ChEBI" id="CHEBI:29105"/>
        <label>1</label>
        <note>catalytic</note>
    </ligand>
</feature>
<feature type="binding site" evidence="3">
    <location>
        <position position="350"/>
    </location>
    <ligand>
        <name>Zn(2+)</name>
        <dbReference type="ChEBI" id="CHEBI:29105"/>
        <label>2</label>
    </ligand>
</feature>
<feature type="binding site" evidence="3">
    <location>
        <position position="390"/>
    </location>
    <ligand>
        <name>Zn(2+)</name>
        <dbReference type="ChEBI" id="CHEBI:29105"/>
        <label>2</label>
    </ligand>
</feature>
<feature type="binding site" evidence="3">
    <location>
        <position position="396"/>
    </location>
    <ligand>
        <name>Zn(2+)</name>
        <dbReference type="ChEBI" id="CHEBI:29105"/>
        <label>2</label>
    </ligand>
</feature>
<feature type="binding site" evidence="3">
    <location>
        <position position="398"/>
    </location>
    <ligand>
        <name>Zn(2+)</name>
        <dbReference type="ChEBI" id="CHEBI:29105"/>
        <label>2</label>
    </ligand>
</feature>
<feature type="site" description="Indirect zinc-binding" evidence="3">
    <location>
        <position position="280"/>
    </location>
</feature>
<feature type="modified residue" description="Phosphoserine" evidence="2">
    <location>
        <position position="2"/>
    </location>
</feature>
<feature type="modified residue" description="Phosphoserine" evidence="2">
    <location>
        <position position="48"/>
    </location>
</feature>
<feature type="modified residue" description="Phosphoserine" evidence="2">
    <location>
        <position position="243"/>
    </location>
</feature>
<dbReference type="EC" id="3.4.19.-" evidence="2"/>
<dbReference type="EMBL" id="AB010123">
    <property type="protein sequence ID" value="BAB78604.1"/>
    <property type="molecule type" value="mRNA"/>
</dbReference>
<dbReference type="EMBL" id="AK017600">
    <property type="protein sequence ID" value="BAB30832.1"/>
    <property type="molecule type" value="mRNA"/>
</dbReference>
<dbReference type="EMBL" id="AK019907">
    <property type="protein sequence ID" value="BAB31909.1"/>
    <property type="molecule type" value="mRNA"/>
</dbReference>
<dbReference type="EMBL" id="AK136961">
    <property type="protein sequence ID" value="BAE23188.1"/>
    <property type="molecule type" value="mRNA"/>
</dbReference>
<dbReference type="EMBL" id="AK139391">
    <property type="protein sequence ID" value="BAE23991.1"/>
    <property type="molecule type" value="mRNA"/>
</dbReference>
<dbReference type="EMBL" id="BC003497">
    <property type="protein sequence ID" value="AAH03497.1"/>
    <property type="molecule type" value="mRNA"/>
</dbReference>
<dbReference type="EMBL" id="BC006939">
    <property type="protein sequence ID" value="AAH06939.1"/>
    <property type="molecule type" value="mRNA"/>
</dbReference>
<dbReference type="EMBL" id="BC025111">
    <property type="protein sequence ID" value="AAH25111.1"/>
    <property type="molecule type" value="mRNA"/>
</dbReference>
<dbReference type="CCDS" id="CCDS20280.1"/>
<dbReference type="RefSeq" id="NP_001349007.1">
    <property type="nucleotide sequence ID" value="NM_001362078.1"/>
</dbReference>
<dbReference type="RefSeq" id="NP_001349008.1">
    <property type="nucleotide sequence ID" value="NM_001362079.1"/>
</dbReference>
<dbReference type="RefSeq" id="NP_001349009.1">
    <property type="nucleotide sequence ID" value="NM_001362080.1"/>
</dbReference>
<dbReference type="RefSeq" id="NP_077201.1">
    <property type="nucleotide sequence ID" value="NM_024239.2"/>
</dbReference>
<dbReference type="RefSeq" id="XP_006506646.1">
    <property type="nucleotide sequence ID" value="XM_006506583.4"/>
</dbReference>
<dbReference type="RefSeq" id="XP_006506647.1">
    <property type="nucleotide sequence ID" value="XM_006506584.4"/>
</dbReference>
<dbReference type="RefSeq" id="XP_006506648.1">
    <property type="nucleotide sequence ID" value="XM_006506585.1"/>
</dbReference>
<dbReference type="RefSeq" id="XP_030111450.1">
    <property type="nucleotide sequence ID" value="XM_030255590.2"/>
</dbReference>
<dbReference type="SMR" id="Q9CQ26"/>
<dbReference type="BioGRID" id="214112">
    <property type="interactions" value="2"/>
</dbReference>
<dbReference type="FunCoup" id="Q9CQ26">
    <property type="interactions" value="4414"/>
</dbReference>
<dbReference type="STRING" id="10090.ENSMUSP00000070876"/>
<dbReference type="MEROPS" id="M67.003"/>
<dbReference type="iPTMnet" id="Q9CQ26"/>
<dbReference type="PhosphoSitePlus" id="Q9CQ26"/>
<dbReference type="SwissPalm" id="Q9CQ26"/>
<dbReference type="PaxDb" id="10090-ENSMUSP00000070876"/>
<dbReference type="ProteomicsDB" id="257447"/>
<dbReference type="Pumba" id="Q9CQ26"/>
<dbReference type="Antibodypedia" id="31376">
    <property type="antibodies" value="303 antibodies from 36 providers"/>
</dbReference>
<dbReference type="DNASU" id="70527"/>
<dbReference type="Ensembl" id="ENSMUST00000068054.9">
    <property type="protein sequence ID" value="ENSMUSP00000070876.8"/>
    <property type="gene ID" value="ENSMUSG00000006906.11"/>
</dbReference>
<dbReference type="Ensembl" id="ENSMUST00000206400.2">
    <property type="protein sequence ID" value="ENSMUSP00000145871.2"/>
    <property type="gene ID" value="ENSMUSG00000006906.11"/>
</dbReference>
<dbReference type="Ensembl" id="ENSMUST00000206592.2">
    <property type="protein sequence ID" value="ENSMUSP00000146294.2"/>
    <property type="gene ID" value="ENSMUSG00000006906.11"/>
</dbReference>
<dbReference type="GeneID" id="70527"/>
<dbReference type="KEGG" id="mmu:70527"/>
<dbReference type="UCSC" id="uc009cns.1">
    <property type="organism name" value="mouse"/>
</dbReference>
<dbReference type="AGR" id="MGI:1917777"/>
<dbReference type="CTD" id="10617"/>
<dbReference type="MGI" id="MGI:1917777">
    <property type="gene designation" value="Stambp"/>
</dbReference>
<dbReference type="VEuPathDB" id="HostDB:ENSMUSG00000006906"/>
<dbReference type="eggNOG" id="KOG2880">
    <property type="taxonomic scope" value="Eukaryota"/>
</dbReference>
<dbReference type="GeneTree" id="ENSGT00940000153710"/>
<dbReference type="HOGENOM" id="CLU_023304_0_1_1"/>
<dbReference type="InParanoid" id="Q9CQ26"/>
<dbReference type="OMA" id="MKFMTLF"/>
<dbReference type="OrthoDB" id="3640at2759"/>
<dbReference type="PhylomeDB" id="Q9CQ26"/>
<dbReference type="TreeFam" id="TF323215"/>
<dbReference type="Reactome" id="R-MMU-5689901">
    <property type="pathway name" value="Metalloprotease DUBs"/>
</dbReference>
<dbReference type="BioGRID-ORCS" id="70527">
    <property type="hits" value="4 hits in 76 CRISPR screens"/>
</dbReference>
<dbReference type="ChiTaRS" id="Stambp">
    <property type="organism name" value="mouse"/>
</dbReference>
<dbReference type="PRO" id="PR:Q9CQ26"/>
<dbReference type="Proteomes" id="UP000000589">
    <property type="component" value="Chromosome 6"/>
</dbReference>
<dbReference type="RNAct" id="Q9CQ26">
    <property type="molecule type" value="protein"/>
</dbReference>
<dbReference type="Bgee" id="ENSMUSG00000006906">
    <property type="expression patterns" value="Expressed in interventricular septum and 234 other cell types or tissues"/>
</dbReference>
<dbReference type="GO" id="GO:0032154">
    <property type="term" value="C:cleavage furrow"/>
    <property type="evidence" value="ECO:0000314"/>
    <property type="project" value="MGI"/>
</dbReference>
<dbReference type="GO" id="GO:0005829">
    <property type="term" value="C:cytosol"/>
    <property type="evidence" value="ECO:0007669"/>
    <property type="project" value="Ensembl"/>
</dbReference>
<dbReference type="GO" id="GO:0005769">
    <property type="term" value="C:early endosome"/>
    <property type="evidence" value="ECO:0007669"/>
    <property type="project" value="UniProtKB-SubCell"/>
</dbReference>
<dbReference type="GO" id="GO:0005654">
    <property type="term" value="C:nucleoplasm"/>
    <property type="evidence" value="ECO:0007669"/>
    <property type="project" value="Ensembl"/>
</dbReference>
<dbReference type="GO" id="GO:0101005">
    <property type="term" value="F:deubiquitinase activity"/>
    <property type="evidence" value="ECO:0000266"/>
    <property type="project" value="MGI"/>
</dbReference>
<dbReference type="GO" id="GO:0061578">
    <property type="term" value="F:K63-linked deubiquitinase activity"/>
    <property type="evidence" value="ECO:0000250"/>
    <property type="project" value="UniProtKB"/>
</dbReference>
<dbReference type="GO" id="GO:0046872">
    <property type="term" value="F:metal ion binding"/>
    <property type="evidence" value="ECO:0007669"/>
    <property type="project" value="UniProtKB-KW"/>
</dbReference>
<dbReference type="GO" id="GO:0140492">
    <property type="term" value="F:metal-dependent deubiquitinase activity"/>
    <property type="evidence" value="ECO:0007669"/>
    <property type="project" value="InterPro"/>
</dbReference>
<dbReference type="GO" id="GO:0019904">
    <property type="term" value="F:protein domain specific binding"/>
    <property type="evidence" value="ECO:0007669"/>
    <property type="project" value="Ensembl"/>
</dbReference>
<dbReference type="GO" id="GO:0110088">
    <property type="term" value="P:hippocampal neuron apoptotic process"/>
    <property type="evidence" value="ECO:0000315"/>
    <property type="project" value="MGI"/>
</dbReference>
<dbReference type="GO" id="GO:0000281">
    <property type="term" value="P:mitotic cytokinesis"/>
    <property type="evidence" value="ECO:0000266"/>
    <property type="project" value="MGI"/>
</dbReference>
<dbReference type="GO" id="GO:0110091">
    <property type="term" value="P:negative regulation of hippocampal neuron apoptotic process"/>
    <property type="evidence" value="ECO:0000315"/>
    <property type="project" value="MGI"/>
</dbReference>
<dbReference type="GO" id="GO:0051898">
    <property type="term" value="P:negative regulation of phosphatidylinositol 3-kinase/protein kinase B signal transduction"/>
    <property type="evidence" value="ECO:0007669"/>
    <property type="project" value="Ensembl"/>
</dbReference>
<dbReference type="GO" id="GO:0046580">
    <property type="term" value="P:negative regulation of Ras protein signal transduction"/>
    <property type="evidence" value="ECO:0007669"/>
    <property type="project" value="Ensembl"/>
</dbReference>
<dbReference type="GO" id="GO:0016579">
    <property type="term" value="P:protein deubiquitination"/>
    <property type="evidence" value="ECO:0000315"/>
    <property type="project" value="MGI"/>
</dbReference>
<dbReference type="GO" id="GO:0070536">
    <property type="term" value="P:protein K63-linked deubiquitination"/>
    <property type="evidence" value="ECO:0007669"/>
    <property type="project" value="InterPro"/>
</dbReference>
<dbReference type="GO" id="GO:0006508">
    <property type="term" value="P:proteolysis"/>
    <property type="evidence" value="ECO:0007669"/>
    <property type="project" value="UniProtKB-KW"/>
</dbReference>
<dbReference type="CDD" id="cd08066">
    <property type="entry name" value="MPN_AMSH_like"/>
    <property type="match status" value="1"/>
</dbReference>
<dbReference type="FunFam" id="3.40.140.10:FF:000010">
    <property type="entry name" value="AMSH-like protease isoform X1"/>
    <property type="match status" value="1"/>
</dbReference>
<dbReference type="FunFam" id="1.20.58.80:FF:000013">
    <property type="entry name" value="STAM-binding protein-like A"/>
    <property type="match status" value="1"/>
</dbReference>
<dbReference type="Gene3D" id="3.40.140.10">
    <property type="entry name" value="Cytidine Deaminase, domain 2"/>
    <property type="match status" value="1"/>
</dbReference>
<dbReference type="Gene3D" id="1.20.58.80">
    <property type="entry name" value="Phosphotransferase system, lactose/cellobiose-type IIA subunit"/>
    <property type="match status" value="1"/>
</dbReference>
<dbReference type="InterPro" id="IPR000555">
    <property type="entry name" value="JAMM/MPN+_dom"/>
</dbReference>
<dbReference type="InterPro" id="IPR037518">
    <property type="entry name" value="MPN"/>
</dbReference>
<dbReference type="InterPro" id="IPR044098">
    <property type="entry name" value="STAMBP/STALP-like_MPN"/>
</dbReference>
<dbReference type="InterPro" id="IPR015063">
    <property type="entry name" value="USP8_dimer"/>
</dbReference>
<dbReference type="PANTHER" id="PTHR12947">
    <property type="entry name" value="AMSH-LIKE PROTEASE"/>
    <property type="match status" value="1"/>
</dbReference>
<dbReference type="PANTHER" id="PTHR12947:SF8">
    <property type="entry name" value="STAM-BINDING PROTEIN"/>
    <property type="match status" value="1"/>
</dbReference>
<dbReference type="Pfam" id="PF01398">
    <property type="entry name" value="JAB"/>
    <property type="match status" value="1"/>
</dbReference>
<dbReference type="Pfam" id="PF08969">
    <property type="entry name" value="USP8_dimer"/>
    <property type="match status" value="1"/>
</dbReference>
<dbReference type="SMART" id="SM00232">
    <property type="entry name" value="JAB_MPN"/>
    <property type="match status" value="1"/>
</dbReference>
<dbReference type="SUPFAM" id="SSF102712">
    <property type="entry name" value="JAB1/MPN domain"/>
    <property type="match status" value="1"/>
</dbReference>
<dbReference type="SUPFAM" id="SSF140856">
    <property type="entry name" value="USP8 N-terminal domain-like"/>
    <property type="match status" value="1"/>
</dbReference>
<dbReference type="PROSITE" id="PS50249">
    <property type="entry name" value="MPN"/>
    <property type="match status" value="1"/>
</dbReference>
<name>STABP_MOUSE</name>
<accession>Q9CQ26</accession>
<accession>Q3UTI9</accession>
<sequence>MSDHGDVSLPPQDRVRILSQLGSAVELNEDIPPRRYYRSGVEIIRMASVYSEEGNIEHAFILYNKYITLFIEKLPKHRDYKSAIIPEKKDAVKKLKSVAFPKAEELKTELLRRYTKEYEQYKERKKKEEEELARNIAIQQELEKEKQRVAQQKQKQLEQEQFHAFEEMIQRQELEKERLKIVQEFGKVDPGPCGPLLPDLEKPCVDVAPSSPFSPTQTPDCNTGMRPAKPPVVDRSLKPGALSVIENVPTIEGLRHIVVPRNLCSEFLQLASANTAKGIETCGVLCGKLMRNEFTITHVLIPRQNGGPDYCHTENEEEIFFMQDDLGLLTLGWIHTHPTQTAFLSSVDLHTHCSYQMMLPESIAIVCSPKFQETGFFKLTDYGLQEISTCRQKGFHPHGRDPPLFCDCSHVTVKDRIVTITDLR</sequence>
<keyword id="KW-0963">Cytoplasm</keyword>
<keyword id="KW-0967">Endosome</keyword>
<keyword id="KW-0378">Hydrolase</keyword>
<keyword id="KW-0472">Membrane</keyword>
<keyword id="KW-0479">Metal-binding</keyword>
<keyword id="KW-0482">Metalloprotease</keyword>
<keyword id="KW-0539">Nucleus</keyword>
<keyword id="KW-0597">Phosphoprotein</keyword>
<keyword id="KW-0645">Protease</keyword>
<keyword id="KW-1185">Reference proteome</keyword>
<keyword id="KW-0832">Ubl conjugation</keyword>
<keyword id="KW-0833">Ubl conjugation pathway</keyword>
<keyword id="KW-0862">Zinc</keyword>
<comment type="function">
    <text evidence="2">Zinc metalloprotease that specifically cleaves 'Lys-63'-linked polyubiquitin chains. Does not cleave 'Lys-48'-linked polyubiquitin chains. Plays a role in signal transduction for cell growth and MYC induction mediated by IL-2 and GM-CSF. Potentiates BMP (bone morphogenetic protein) signaling by antagonizing the inhibitory action of SMAD6 and SMAD7. Has a key role in regulation of cell surface receptor-mediated endocytosis and ubiquitin-dependent sorting of receptors to lysosomes. Endosomal localization of STAMBP is required for efficient EGFR degradation but not for its internalization. Involved in the negative regulation of PI3K-AKT-mTOR and RAS-MAP signaling pathways.</text>
</comment>
<comment type="cofactor">
    <cofactor evidence="1">
        <name>Zn(2+)</name>
        <dbReference type="ChEBI" id="CHEBI:29105"/>
    </cofactor>
    <text evidence="1">Binds 2 Zn(2+) ions per subunit.</text>
</comment>
<comment type="activity regulation">
    <text evidence="2">Inhibited by N-ethylmaleimide.</text>
</comment>
<comment type="subunit">
    <text evidence="2">Interacts with STAM. Interacts with SMAD6 and SMAD7. Interacts with CHMP3; the interaction appears to relieve the autoinhibition of CHMP3. Interacts with SMURF2 and RNF11; this interaction promotes ubiquitination.</text>
</comment>
<comment type="subcellular location">
    <subcellularLocation>
        <location evidence="2">Nucleus</location>
    </subcellularLocation>
    <subcellularLocation>
        <location evidence="2">Membrane</location>
        <topology evidence="2">Peripheral membrane protein</topology>
    </subcellularLocation>
    <subcellularLocation>
        <location evidence="2">Cytoplasm</location>
    </subcellularLocation>
    <subcellularLocation>
        <location evidence="2">Early endosome</location>
    </subcellularLocation>
</comment>
<comment type="tissue specificity">
    <text evidence="5">Expressed in brain.</text>
</comment>
<comment type="developmental stage">
    <text evidence="5">Highest expression at 18.5 dpc, followed by a gradual decrease.</text>
</comment>
<comment type="domain">
    <text evidence="1">The JAMM motif is essential for the protease activity.</text>
</comment>
<comment type="PTM">
    <text evidence="2">Phosphorylated after BMP type I receptor activation.</text>
</comment>
<comment type="PTM">
    <text evidence="2">Ubiquitinated by SMURF2 in the presence of RNF11.</text>
</comment>
<comment type="disruption phenotype">
    <text evidence="5">Mice show a loss of neurons and apoptotic cells in the hippocampus.</text>
</comment>
<comment type="similarity">
    <text evidence="6">Belongs to the peptidase M67C family.</text>
</comment>
<protein>
    <recommendedName>
        <fullName>STAM-binding protein</fullName>
        <ecNumber evidence="2">3.4.19.-</ecNumber>
    </recommendedName>
    <alternativeName>
        <fullName>Associated molecule with the SH3 domain of STAM</fullName>
    </alternativeName>
</protein>